<organism>
    <name type="scientific">Arabidopsis thaliana</name>
    <name type="common">Mouse-ear cress</name>
    <dbReference type="NCBI Taxonomy" id="3702"/>
    <lineage>
        <taxon>Eukaryota</taxon>
        <taxon>Viridiplantae</taxon>
        <taxon>Streptophyta</taxon>
        <taxon>Embryophyta</taxon>
        <taxon>Tracheophyta</taxon>
        <taxon>Spermatophyta</taxon>
        <taxon>Magnoliopsida</taxon>
        <taxon>eudicotyledons</taxon>
        <taxon>Gunneridae</taxon>
        <taxon>Pentapetalae</taxon>
        <taxon>rosids</taxon>
        <taxon>malvids</taxon>
        <taxon>Brassicales</taxon>
        <taxon>Brassicaceae</taxon>
        <taxon>Camelineae</taxon>
        <taxon>Arabidopsis</taxon>
    </lineage>
</organism>
<keyword id="KW-0067">ATP-binding</keyword>
<keyword id="KW-1003">Cell membrane</keyword>
<keyword id="KW-0325">Glycoprotein</keyword>
<keyword id="KW-0418">Kinase</keyword>
<keyword id="KW-0472">Membrane</keyword>
<keyword id="KW-0547">Nucleotide-binding</keyword>
<keyword id="KW-0597">Phosphoprotein</keyword>
<keyword id="KW-0675">Receptor</keyword>
<keyword id="KW-1185">Reference proteome</keyword>
<keyword id="KW-0723">Serine/threonine-protein kinase</keyword>
<keyword id="KW-0808">Transferase</keyword>
<keyword id="KW-0812">Transmembrane</keyword>
<keyword id="KW-1133">Transmembrane helix</keyword>
<accession>Q9XI96</accession>
<name>PERK7_ARATH</name>
<sequence>MAEGQSPENSPPAPPPPSPPSPPSSNDQQTTSPPPSDNQETTSPPPPSSPDIAPPPQQQQESPPPPLPENSSDGSSSSSPPPPSDSSSQSQSPPPPSTSPPQQSDNNGNKGNNNENNKGNDGSSGDGGNKNMSHTPPPPSKTSDHSSHSQPRSLAPPTSNSGSNSSSNDGLNIGAVIGLVAAAGILFIVMILLCVCCFRKKKKKSKLDQMPYYGSNAYPAGKTGGDQYYNQNAATQQQQHYNQNDHIVNLPPPPGSMGTNWVSSPPPPPPGNWQPMPSPPAPVSGGANVIQSGEMSSNFSSGPYAPSLPPPHPSVALGFNNSTFTYEELASATQGFSKDRLLGQGGFGYVHKGILPNGKEIAVKSLKAGSGQGEREFQAEVEIISRVHHRHLVSLVGYCSNAGGQRLLVYEFLPNDTLEFHLHGKSGTVMDWPTRLKIALGSAKGLAYLHEDCHPKIIHRDIKASNILLDHNFEAKVADFGLAKLSQDNNTHVSTRVMGTFGYLAPEYASSGKLTEKSDVFSFGVMLLELITGRGPVDLSGDMEDSLVDWARPLCMRVAQDGEYGELVDPFLEHQYEPYEMARMVACAAAAVRHSGRRRPKMSQIVRTLEGDASLDDLDDGVKPKQSSSGGEGSSDYEMGTYGAEMRKFRKVTLESRDYGASSEYGATSEYGLDPSSSSSEEMHIGGSTSKTTTTNRGI</sequence>
<proteinExistence type="evidence at transcript level"/>
<evidence type="ECO:0000250" key="1"/>
<evidence type="ECO:0000250" key="2">
    <source>
        <dbReference type="UniProtKB" id="O48814"/>
    </source>
</evidence>
<evidence type="ECO:0000255" key="3"/>
<evidence type="ECO:0000255" key="4">
    <source>
        <dbReference type="PROSITE-ProRule" id="PRU00159"/>
    </source>
</evidence>
<evidence type="ECO:0000255" key="5">
    <source>
        <dbReference type="PROSITE-ProRule" id="PRU10027"/>
    </source>
</evidence>
<evidence type="ECO:0000256" key="6">
    <source>
        <dbReference type="SAM" id="MobiDB-lite"/>
    </source>
</evidence>
<evidence type="ECO:0000269" key="7">
    <source>
    </source>
</evidence>
<comment type="catalytic activity">
    <reaction>
        <text>L-seryl-[protein] + ATP = O-phospho-L-seryl-[protein] + ADP + H(+)</text>
        <dbReference type="Rhea" id="RHEA:17989"/>
        <dbReference type="Rhea" id="RHEA-COMP:9863"/>
        <dbReference type="Rhea" id="RHEA-COMP:11604"/>
        <dbReference type="ChEBI" id="CHEBI:15378"/>
        <dbReference type="ChEBI" id="CHEBI:29999"/>
        <dbReference type="ChEBI" id="CHEBI:30616"/>
        <dbReference type="ChEBI" id="CHEBI:83421"/>
        <dbReference type="ChEBI" id="CHEBI:456216"/>
        <dbReference type="EC" id="2.7.11.1"/>
    </reaction>
</comment>
<comment type="catalytic activity">
    <reaction>
        <text>L-threonyl-[protein] + ATP = O-phospho-L-threonyl-[protein] + ADP + H(+)</text>
        <dbReference type="Rhea" id="RHEA:46608"/>
        <dbReference type="Rhea" id="RHEA-COMP:11060"/>
        <dbReference type="Rhea" id="RHEA-COMP:11605"/>
        <dbReference type="ChEBI" id="CHEBI:15378"/>
        <dbReference type="ChEBI" id="CHEBI:30013"/>
        <dbReference type="ChEBI" id="CHEBI:30616"/>
        <dbReference type="ChEBI" id="CHEBI:61977"/>
        <dbReference type="ChEBI" id="CHEBI:456216"/>
        <dbReference type="EC" id="2.7.11.1"/>
    </reaction>
</comment>
<comment type="subcellular location">
    <subcellularLocation>
        <location evidence="1">Cell membrane</location>
        <topology evidence="1">Single-pass membrane protein</topology>
    </subcellularLocation>
</comment>
<comment type="tissue specificity">
    <text evidence="7">Mostly expressed in flower buds.</text>
</comment>
<comment type="similarity">
    <text evidence="4">Belongs to the protein kinase superfamily. Ser/Thr protein kinase family.</text>
</comment>
<reference key="1">
    <citation type="journal article" date="2000" name="Nature">
        <title>Sequence and analysis of chromosome 1 of the plant Arabidopsis thaliana.</title>
        <authorList>
            <person name="Theologis A."/>
            <person name="Ecker J.R."/>
            <person name="Palm C.J."/>
            <person name="Federspiel N.A."/>
            <person name="Kaul S."/>
            <person name="White O."/>
            <person name="Alonso J."/>
            <person name="Altafi H."/>
            <person name="Araujo R."/>
            <person name="Bowman C.L."/>
            <person name="Brooks S.Y."/>
            <person name="Buehler E."/>
            <person name="Chan A."/>
            <person name="Chao Q."/>
            <person name="Chen H."/>
            <person name="Cheuk R.F."/>
            <person name="Chin C.W."/>
            <person name="Chung M.K."/>
            <person name="Conn L."/>
            <person name="Conway A.B."/>
            <person name="Conway A.R."/>
            <person name="Creasy T.H."/>
            <person name="Dewar K."/>
            <person name="Dunn P."/>
            <person name="Etgu P."/>
            <person name="Feldblyum T.V."/>
            <person name="Feng J.-D."/>
            <person name="Fong B."/>
            <person name="Fujii C.Y."/>
            <person name="Gill J.E."/>
            <person name="Goldsmith A.D."/>
            <person name="Haas B."/>
            <person name="Hansen N.F."/>
            <person name="Hughes B."/>
            <person name="Huizar L."/>
            <person name="Hunter J.L."/>
            <person name="Jenkins J."/>
            <person name="Johnson-Hopson C."/>
            <person name="Khan S."/>
            <person name="Khaykin E."/>
            <person name="Kim C.J."/>
            <person name="Koo H.L."/>
            <person name="Kremenetskaia I."/>
            <person name="Kurtz D.B."/>
            <person name="Kwan A."/>
            <person name="Lam B."/>
            <person name="Langin-Hooper S."/>
            <person name="Lee A."/>
            <person name="Lee J.M."/>
            <person name="Lenz C.A."/>
            <person name="Li J.H."/>
            <person name="Li Y.-P."/>
            <person name="Lin X."/>
            <person name="Liu S.X."/>
            <person name="Liu Z.A."/>
            <person name="Luros J.S."/>
            <person name="Maiti R."/>
            <person name="Marziali A."/>
            <person name="Militscher J."/>
            <person name="Miranda M."/>
            <person name="Nguyen M."/>
            <person name="Nierman W.C."/>
            <person name="Osborne B.I."/>
            <person name="Pai G."/>
            <person name="Peterson J."/>
            <person name="Pham P.K."/>
            <person name="Rizzo M."/>
            <person name="Rooney T."/>
            <person name="Rowley D."/>
            <person name="Sakano H."/>
            <person name="Salzberg S.L."/>
            <person name="Schwartz J.R."/>
            <person name="Shinn P."/>
            <person name="Southwick A.M."/>
            <person name="Sun H."/>
            <person name="Tallon L.J."/>
            <person name="Tambunga G."/>
            <person name="Toriumi M.J."/>
            <person name="Town C.D."/>
            <person name="Utterback T."/>
            <person name="Van Aken S."/>
            <person name="Vaysberg M."/>
            <person name="Vysotskaia V.S."/>
            <person name="Walker M."/>
            <person name="Wu D."/>
            <person name="Yu G."/>
            <person name="Fraser C.M."/>
            <person name="Venter J.C."/>
            <person name="Davis R.W."/>
        </authorList>
    </citation>
    <scope>NUCLEOTIDE SEQUENCE [LARGE SCALE GENOMIC DNA]</scope>
    <source>
        <strain>cv. Columbia</strain>
    </source>
</reference>
<reference key="2">
    <citation type="journal article" date="2017" name="Plant J.">
        <title>Araport11: a complete reannotation of the Arabidopsis thaliana reference genome.</title>
        <authorList>
            <person name="Cheng C.Y."/>
            <person name="Krishnakumar V."/>
            <person name="Chan A.P."/>
            <person name="Thibaud-Nissen F."/>
            <person name="Schobel S."/>
            <person name="Town C.D."/>
        </authorList>
    </citation>
    <scope>GENOME REANNOTATION</scope>
    <source>
        <strain>cv. Columbia</strain>
    </source>
</reference>
<reference key="3">
    <citation type="journal article" date="2006" name="Plant Biotechnol. J.">
        <title>Simultaneous high-throughput recombinational cloning of open reading frames in closed and open configurations.</title>
        <authorList>
            <person name="Underwood B.A."/>
            <person name="Vanderhaeghen R."/>
            <person name="Whitford R."/>
            <person name="Town C.D."/>
            <person name="Hilson P."/>
        </authorList>
    </citation>
    <scope>NUCLEOTIDE SEQUENCE [LARGE SCALE MRNA]</scope>
    <source>
        <strain>cv. Columbia</strain>
    </source>
</reference>
<reference key="4">
    <citation type="journal article" date="2002" name="Plant Mol. Biol.">
        <title>The proline-rich, extensin-like receptor kinase-1 (PERK1) gene is rapidly induced by wounding.</title>
        <authorList>
            <person name="Silva N.F."/>
            <person name="Goring D.R."/>
        </authorList>
    </citation>
    <scope>GENE FAMILY</scope>
</reference>
<reference key="5">
    <citation type="journal article" date="2004" name="Plant Cell Physiol.">
        <title>A comprehensive expression analysis of the Arabidopsis proline-rich extensin-like receptor kinase gene family using bioinformatic and experimental approaches.</title>
        <authorList>
            <person name="Nakhamchik A."/>
            <person name="Zhao Z."/>
            <person name="Provart N.J."/>
            <person name="Shiu S.-H."/>
            <person name="Keatley S.K."/>
            <person name="Cameron R.K."/>
            <person name="Goring D.R."/>
        </authorList>
    </citation>
    <scope>TISSUE SPECIFICITY</scope>
    <scope>GENE FAMILY</scope>
    <scope>NOMENCLATURE</scope>
</reference>
<gene>
    <name type="primary">PERK7</name>
    <name type="ordered locus">At1g49270</name>
    <name type="ORF">F13F21.28</name>
</gene>
<dbReference type="EC" id="2.7.11.1"/>
<dbReference type="EMBL" id="AC007504">
    <property type="protein sequence ID" value="AAD43169.1"/>
    <property type="molecule type" value="Genomic_DNA"/>
</dbReference>
<dbReference type="EMBL" id="CP002684">
    <property type="protein sequence ID" value="AEE32412.1"/>
    <property type="molecule type" value="Genomic_DNA"/>
</dbReference>
<dbReference type="EMBL" id="DQ446346">
    <property type="protein sequence ID" value="ABE65705.1"/>
    <property type="molecule type" value="mRNA"/>
</dbReference>
<dbReference type="PIR" id="A96529">
    <property type="entry name" value="A96529"/>
</dbReference>
<dbReference type="RefSeq" id="NP_175353.1">
    <property type="nucleotide sequence ID" value="NM_103818.2"/>
</dbReference>
<dbReference type="SMR" id="Q9XI96"/>
<dbReference type="STRING" id="3702.Q9XI96"/>
<dbReference type="GlyCosmos" id="Q9XI96">
    <property type="glycosylation" value="3 sites, No reported glycans"/>
</dbReference>
<dbReference type="GlyGen" id="Q9XI96">
    <property type="glycosylation" value="3 sites"/>
</dbReference>
<dbReference type="PaxDb" id="3702-AT1G49270.1"/>
<dbReference type="ProteomicsDB" id="236299"/>
<dbReference type="EnsemblPlants" id="AT1G49270.1">
    <property type="protein sequence ID" value="AT1G49270.1"/>
    <property type="gene ID" value="AT1G49270"/>
</dbReference>
<dbReference type="GeneID" id="841351"/>
<dbReference type="Gramene" id="AT1G49270.1">
    <property type="protein sequence ID" value="AT1G49270.1"/>
    <property type="gene ID" value="AT1G49270"/>
</dbReference>
<dbReference type="KEGG" id="ath:AT1G49270"/>
<dbReference type="Araport" id="AT1G49270"/>
<dbReference type="TAIR" id="AT1G49270">
    <property type="gene designation" value="PERK7"/>
</dbReference>
<dbReference type="eggNOG" id="KOG1187">
    <property type="taxonomic scope" value="Eukaryota"/>
</dbReference>
<dbReference type="HOGENOM" id="CLU_000288_106_6_1"/>
<dbReference type="InParanoid" id="Q9XI96"/>
<dbReference type="OMA" id="TYGAEMR"/>
<dbReference type="PhylomeDB" id="Q9XI96"/>
<dbReference type="PRO" id="PR:Q9XI96"/>
<dbReference type="Proteomes" id="UP000006548">
    <property type="component" value="Chromosome 1"/>
</dbReference>
<dbReference type="ExpressionAtlas" id="Q9XI96">
    <property type="expression patterns" value="baseline and differential"/>
</dbReference>
<dbReference type="GO" id="GO:0005886">
    <property type="term" value="C:plasma membrane"/>
    <property type="evidence" value="ECO:0007669"/>
    <property type="project" value="UniProtKB-SubCell"/>
</dbReference>
<dbReference type="GO" id="GO:0005524">
    <property type="term" value="F:ATP binding"/>
    <property type="evidence" value="ECO:0007669"/>
    <property type="project" value="UniProtKB-KW"/>
</dbReference>
<dbReference type="GO" id="GO:0106310">
    <property type="term" value="F:protein serine kinase activity"/>
    <property type="evidence" value="ECO:0007669"/>
    <property type="project" value="RHEA"/>
</dbReference>
<dbReference type="GO" id="GO:0004674">
    <property type="term" value="F:protein serine/threonine kinase activity"/>
    <property type="evidence" value="ECO:0007669"/>
    <property type="project" value="UniProtKB-KW"/>
</dbReference>
<dbReference type="FunFam" id="1.10.510.10:FF:000239">
    <property type="entry name" value="Proline-rich receptor-like protein kinase PERK1"/>
    <property type="match status" value="1"/>
</dbReference>
<dbReference type="FunFam" id="3.30.200.20:FF:000207">
    <property type="entry name" value="proline-rich receptor-like protein kinase PERK1"/>
    <property type="match status" value="1"/>
</dbReference>
<dbReference type="Gene3D" id="3.30.200.20">
    <property type="entry name" value="Phosphorylase Kinase, domain 1"/>
    <property type="match status" value="1"/>
</dbReference>
<dbReference type="Gene3D" id="1.10.510.10">
    <property type="entry name" value="Transferase(Phosphotransferase) domain 1"/>
    <property type="match status" value="1"/>
</dbReference>
<dbReference type="InterPro" id="IPR011009">
    <property type="entry name" value="Kinase-like_dom_sf"/>
</dbReference>
<dbReference type="InterPro" id="IPR047117">
    <property type="entry name" value="PERK1-13-like"/>
</dbReference>
<dbReference type="InterPro" id="IPR000719">
    <property type="entry name" value="Prot_kinase_dom"/>
</dbReference>
<dbReference type="InterPro" id="IPR017441">
    <property type="entry name" value="Protein_kinase_ATP_BS"/>
</dbReference>
<dbReference type="InterPro" id="IPR001245">
    <property type="entry name" value="Ser-Thr/Tyr_kinase_cat_dom"/>
</dbReference>
<dbReference type="InterPro" id="IPR008271">
    <property type="entry name" value="Ser/Thr_kinase_AS"/>
</dbReference>
<dbReference type="PANTHER" id="PTHR47982">
    <property type="entry name" value="PROLINE-RICH RECEPTOR-LIKE PROTEIN KINASE PERK4"/>
    <property type="match status" value="1"/>
</dbReference>
<dbReference type="PANTHER" id="PTHR47982:SF18">
    <property type="entry name" value="PROLINE-RICH RECEPTOR-LIKE PROTEIN KINASE PERK7"/>
    <property type="match status" value="1"/>
</dbReference>
<dbReference type="Pfam" id="PF07714">
    <property type="entry name" value="PK_Tyr_Ser-Thr"/>
    <property type="match status" value="1"/>
</dbReference>
<dbReference type="SMART" id="SM00220">
    <property type="entry name" value="S_TKc"/>
    <property type="match status" value="1"/>
</dbReference>
<dbReference type="SUPFAM" id="SSF56112">
    <property type="entry name" value="Protein kinase-like (PK-like)"/>
    <property type="match status" value="1"/>
</dbReference>
<dbReference type="PROSITE" id="PS00107">
    <property type="entry name" value="PROTEIN_KINASE_ATP"/>
    <property type="match status" value="1"/>
</dbReference>
<dbReference type="PROSITE" id="PS50011">
    <property type="entry name" value="PROTEIN_KINASE_DOM"/>
    <property type="match status" value="1"/>
</dbReference>
<dbReference type="PROSITE" id="PS00108">
    <property type="entry name" value="PROTEIN_KINASE_ST"/>
    <property type="match status" value="1"/>
</dbReference>
<feature type="chain" id="PRO_0000400059" description="Proline-rich receptor-like protein kinase PERK7">
    <location>
        <begin position="1"/>
        <end position="699"/>
    </location>
</feature>
<feature type="topological domain" description="Extracellular" evidence="3">
    <location>
        <begin position="1"/>
        <end position="172"/>
    </location>
</feature>
<feature type="transmembrane region" description="Helical" evidence="3">
    <location>
        <begin position="173"/>
        <end position="193"/>
    </location>
</feature>
<feature type="topological domain" description="Cytoplasmic" evidence="3">
    <location>
        <begin position="194"/>
        <end position="699"/>
    </location>
</feature>
<feature type="domain" description="Protein kinase" evidence="4">
    <location>
        <begin position="336"/>
        <end position="615"/>
    </location>
</feature>
<feature type="region of interest" description="Disordered" evidence="6">
    <location>
        <begin position="1"/>
        <end position="167"/>
    </location>
</feature>
<feature type="region of interest" description="Disordered" evidence="6">
    <location>
        <begin position="609"/>
        <end position="639"/>
    </location>
</feature>
<feature type="region of interest" description="Disordered" evidence="6">
    <location>
        <begin position="658"/>
        <end position="699"/>
    </location>
</feature>
<feature type="compositionally biased region" description="Pro residues" evidence="6">
    <location>
        <begin position="9"/>
        <end position="23"/>
    </location>
</feature>
<feature type="compositionally biased region" description="Pro residues" evidence="6">
    <location>
        <begin position="43"/>
        <end position="68"/>
    </location>
</feature>
<feature type="compositionally biased region" description="Low complexity" evidence="6">
    <location>
        <begin position="100"/>
        <end position="121"/>
    </location>
</feature>
<feature type="compositionally biased region" description="Polar residues" evidence="6">
    <location>
        <begin position="148"/>
        <end position="158"/>
    </location>
</feature>
<feature type="compositionally biased region" description="Polar residues" evidence="6">
    <location>
        <begin position="687"/>
        <end position="699"/>
    </location>
</feature>
<feature type="active site" description="Proton acceptor" evidence="4 5">
    <location>
        <position position="461"/>
    </location>
</feature>
<feature type="binding site" evidence="4">
    <location>
        <begin position="342"/>
        <end position="350"/>
    </location>
    <ligand>
        <name>ATP</name>
        <dbReference type="ChEBI" id="CHEBI:30616"/>
    </ligand>
</feature>
<feature type="binding site" evidence="4">
    <location>
        <position position="364"/>
    </location>
    <ligand>
        <name>ATP</name>
        <dbReference type="ChEBI" id="CHEBI:30616"/>
    </ligand>
</feature>
<feature type="modified residue" description="Phosphothreonine" evidence="2">
    <location>
        <position position="325"/>
    </location>
</feature>
<feature type="modified residue" description="Phosphotyrosine" evidence="2">
    <location>
        <position position="410"/>
    </location>
</feature>
<feature type="modified residue" description="Phosphoserine" evidence="2">
    <location>
        <position position="465"/>
    </location>
</feature>
<feature type="modified residue" description="Phosphoserine" evidence="2">
    <location>
        <position position="494"/>
    </location>
</feature>
<feature type="modified residue" description="Phosphothreonine" evidence="2">
    <location>
        <position position="495"/>
    </location>
</feature>
<feature type="modified residue" description="Phosphothreonine" evidence="2">
    <location>
        <position position="500"/>
    </location>
</feature>
<feature type="modified residue" description="Phosphotyrosine" evidence="2">
    <location>
        <position position="508"/>
    </location>
</feature>
<feature type="glycosylation site" description="N-linked (GlcNAc...) asparagine" evidence="3">
    <location>
        <position position="70"/>
    </location>
</feature>
<feature type="glycosylation site" description="N-linked (GlcNAc...) asparagine" evidence="3">
    <location>
        <position position="131"/>
    </location>
</feature>
<feature type="glycosylation site" description="N-linked (GlcNAc...) asparagine" evidence="3">
    <location>
        <position position="164"/>
    </location>
</feature>
<protein>
    <recommendedName>
        <fullName>Proline-rich receptor-like protein kinase PERK7</fullName>
        <ecNumber>2.7.11.1</ecNumber>
    </recommendedName>
    <alternativeName>
        <fullName>Proline-rich extensin-like receptor kinase 7</fullName>
        <shortName>AtPERK7</shortName>
    </alternativeName>
</protein>